<dbReference type="EC" id="4.2.1.33" evidence="1"/>
<dbReference type="EMBL" id="BX640415">
    <property type="protein sequence ID" value="CAE41770.1"/>
    <property type="molecule type" value="Genomic_DNA"/>
</dbReference>
<dbReference type="RefSeq" id="NP_880218.1">
    <property type="nucleotide sequence ID" value="NC_002929.2"/>
</dbReference>
<dbReference type="RefSeq" id="WP_010930379.1">
    <property type="nucleotide sequence ID" value="NZ_CP039022.1"/>
</dbReference>
<dbReference type="SMR" id="Q7VY75"/>
<dbReference type="STRING" id="257313.BP1481"/>
<dbReference type="PaxDb" id="257313-BP1481"/>
<dbReference type="GeneID" id="69601395"/>
<dbReference type="KEGG" id="bpe:BP1481"/>
<dbReference type="PATRIC" id="fig|257313.5.peg.1589"/>
<dbReference type="eggNOG" id="COG0065">
    <property type="taxonomic scope" value="Bacteria"/>
</dbReference>
<dbReference type="HOGENOM" id="CLU_006714_3_4_4"/>
<dbReference type="UniPathway" id="UPA00048">
    <property type="reaction ID" value="UER00071"/>
</dbReference>
<dbReference type="Proteomes" id="UP000002676">
    <property type="component" value="Chromosome"/>
</dbReference>
<dbReference type="GO" id="GO:0003861">
    <property type="term" value="F:3-isopropylmalate dehydratase activity"/>
    <property type="evidence" value="ECO:0007669"/>
    <property type="project" value="UniProtKB-UniRule"/>
</dbReference>
<dbReference type="GO" id="GO:0051539">
    <property type="term" value="F:4 iron, 4 sulfur cluster binding"/>
    <property type="evidence" value="ECO:0007669"/>
    <property type="project" value="UniProtKB-KW"/>
</dbReference>
<dbReference type="GO" id="GO:0046872">
    <property type="term" value="F:metal ion binding"/>
    <property type="evidence" value="ECO:0007669"/>
    <property type="project" value="UniProtKB-KW"/>
</dbReference>
<dbReference type="GO" id="GO:0009098">
    <property type="term" value="P:L-leucine biosynthetic process"/>
    <property type="evidence" value="ECO:0007669"/>
    <property type="project" value="UniProtKB-UniRule"/>
</dbReference>
<dbReference type="CDD" id="cd01583">
    <property type="entry name" value="IPMI"/>
    <property type="match status" value="1"/>
</dbReference>
<dbReference type="FunFam" id="3.30.499.10:FF:000007">
    <property type="entry name" value="3-isopropylmalate dehydratase large subunit"/>
    <property type="match status" value="1"/>
</dbReference>
<dbReference type="Gene3D" id="3.30.499.10">
    <property type="entry name" value="Aconitase, domain 3"/>
    <property type="match status" value="2"/>
</dbReference>
<dbReference type="HAMAP" id="MF_01026">
    <property type="entry name" value="LeuC_type1"/>
    <property type="match status" value="1"/>
</dbReference>
<dbReference type="InterPro" id="IPR004430">
    <property type="entry name" value="3-IsopropMal_deHydase_lsu"/>
</dbReference>
<dbReference type="InterPro" id="IPR015931">
    <property type="entry name" value="Acnase/IPM_dHydase_lsu_aba_1/3"/>
</dbReference>
<dbReference type="InterPro" id="IPR001030">
    <property type="entry name" value="Acoase/IPM_deHydtase_lsu_aba"/>
</dbReference>
<dbReference type="InterPro" id="IPR018136">
    <property type="entry name" value="Aconitase_4Fe-4S_BS"/>
</dbReference>
<dbReference type="InterPro" id="IPR036008">
    <property type="entry name" value="Aconitase_4Fe-4S_dom"/>
</dbReference>
<dbReference type="InterPro" id="IPR050067">
    <property type="entry name" value="IPM_dehydratase_rel_enz"/>
</dbReference>
<dbReference type="InterPro" id="IPR033941">
    <property type="entry name" value="IPMI_cat"/>
</dbReference>
<dbReference type="NCBIfam" id="TIGR00170">
    <property type="entry name" value="leuC"/>
    <property type="match status" value="1"/>
</dbReference>
<dbReference type="NCBIfam" id="NF004016">
    <property type="entry name" value="PRK05478.1"/>
    <property type="match status" value="1"/>
</dbReference>
<dbReference type="NCBIfam" id="NF009116">
    <property type="entry name" value="PRK12466.1"/>
    <property type="match status" value="1"/>
</dbReference>
<dbReference type="PANTHER" id="PTHR43822:SF9">
    <property type="entry name" value="3-ISOPROPYLMALATE DEHYDRATASE"/>
    <property type="match status" value="1"/>
</dbReference>
<dbReference type="PANTHER" id="PTHR43822">
    <property type="entry name" value="HOMOACONITASE, MITOCHONDRIAL-RELATED"/>
    <property type="match status" value="1"/>
</dbReference>
<dbReference type="Pfam" id="PF00330">
    <property type="entry name" value="Aconitase"/>
    <property type="match status" value="1"/>
</dbReference>
<dbReference type="PRINTS" id="PR00415">
    <property type="entry name" value="ACONITASE"/>
</dbReference>
<dbReference type="SUPFAM" id="SSF53732">
    <property type="entry name" value="Aconitase iron-sulfur domain"/>
    <property type="match status" value="1"/>
</dbReference>
<dbReference type="PROSITE" id="PS00450">
    <property type="entry name" value="ACONITASE_1"/>
    <property type="match status" value="1"/>
</dbReference>
<dbReference type="PROSITE" id="PS01244">
    <property type="entry name" value="ACONITASE_2"/>
    <property type="match status" value="1"/>
</dbReference>
<keyword id="KW-0004">4Fe-4S</keyword>
<keyword id="KW-0028">Amino-acid biosynthesis</keyword>
<keyword id="KW-0100">Branched-chain amino acid biosynthesis</keyword>
<keyword id="KW-0408">Iron</keyword>
<keyword id="KW-0411">Iron-sulfur</keyword>
<keyword id="KW-0432">Leucine biosynthesis</keyword>
<keyword id="KW-0456">Lyase</keyword>
<keyword id="KW-0479">Metal-binding</keyword>
<keyword id="KW-1185">Reference proteome</keyword>
<feature type="chain" id="PRO_0000076710" description="3-isopropylmalate dehydratase large subunit">
    <location>
        <begin position="1"/>
        <end position="467"/>
    </location>
</feature>
<feature type="binding site" evidence="1">
    <location>
        <position position="347"/>
    </location>
    <ligand>
        <name>[4Fe-4S] cluster</name>
        <dbReference type="ChEBI" id="CHEBI:49883"/>
    </ligand>
</feature>
<feature type="binding site" evidence="1">
    <location>
        <position position="408"/>
    </location>
    <ligand>
        <name>[4Fe-4S] cluster</name>
        <dbReference type="ChEBI" id="CHEBI:49883"/>
    </ligand>
</feature>
<feature type="binding site" evidence="1">
    <location>
        <position position="411"/>
    </location>
    <ligand>
        <name>[4Fe-4S] cluster</name>
        <dbReference type="ChEBI" id="CHEBI:49883"/>
    </ligand>
</feature>
<comment type="function">
    <text evidence="1">Catalyzes the isomerization between 2-isopropylmalate and 3-isopropylmalate, via the formation of 2-isopropylmaleate.</text>
</comment>
<comment type="catalytic activity">
    <reaction evidence="1">
        <text>(2R,3S)-3-isopropylmalate = (2S)-2-isopropylmalate</text>
        <dbReference type="Rhea" id="RHEA:32287"/>
        <dbReference type="ChEBI" id="CHEBI:1178"/>
        <dbReference type="ChEBI" id="CHEBI:35121"/>
        <dbReference type="EC" id="4.2.1.33"/>
    </reaction>
</comment>
<comment type="cofactor">
    <cofactor evidence="1">
        <name>[4Fe-4S] cluster</name>
        <dbReference type="ChEBI" id="CHEBI:49883"/>
    </cofactor>
    <text evidence="1">Binds 1 [4Fe-4S] cluster per subunit.</text>
</comment>
<comment type="pathway">
    <text evidence="1">Amino-acid biosynthesis; L-leucine biosynthesis; L-leucine from 3-methyl-2-oxobutanoate: step 2/4.</text>
</comment>
<comment type="subunit">
    <text evidence="1">Heterodimer of LeuC and LeuD.</text>
</comment>
<comment type="similarity">
    <text evidence="1">Belongs to the aconitase/IPM isomerase family. LeuC type 1 subfamily.</text>
</comment>
<protein>
    <recommendedName>
        <fullName evidence="1">3-isopropylmalate dehydratase large subunit</fullName>
        <ecNumber evidence="1">4.2.1.33</ecNumber>
    </recommendedName>
    <alternativeName>
        <fullName evidence="1">Alpha-IPM isomerase</fullName>
        <shortName evidence="1">IPMI</shortName>
    </alternativeName>
    <alternativeName>
        <fullName evidence="1">Isopropylmalate isomerase</fullName>
    </alternativeName>
</protein>
<evidence type="ECO:0000255" key="1">
    <source>
        <dbReference type="HAMAP-Rule" id="MF_01026"/>
    </source>
</evidence>
<name>LEUC_BORPE</name>
<sequence>MAQTLYDKLWDAHVVHQESDGTCMLYIDRHLLHEVTSPQAFEGLALAGRQPWRVGANLAVADHNVPTLNRAQGIEDPISRLQVDTLDDNCAKYGITEFRMNDLRQGIVHVIGPEQGATLPGMTVVCGDSHTSTHGALGALAFGIGTSEVEHVLATQTLLMKKAKSMQINVEGELPFGCTAKDVVLHIIGIIGTAGGTGHAIEFSGSTIRGLSVEGRMTVCNMAIEAGARSGMVAVDDKTIDYFRGRPFAPVGVLWDQAVGYWRTLHSDAGARFDRVINVDARDIKPQVTWGTSPEMVLPVDGRVPDPDREKDDVRRSGMERALEYMGLKPNTPLVDIRVDRVFIGSCTNSRIEDLRAAAVVARGKRVAANVRQAMVVPGSGLVKQQAEREGLDKIFIEAGFEWREPGCSMCLAMNADRLEPGERCASTSNRNFEGRQGQGGRTHLVSPAMAAAAAVAGHFVDVRSFR</sequence>
<gene>
    <name evidence="1" type="primary">leuC</name>
    <name type="ordered locus">BP1481</name>
</gene>
<accession>Q7VY75</accession>
<proteinExistence type="inferred from homology"/>
<reference key="1">
    <citation type="journal article" date="2003" name="Nat. Genet.">
        <title>Comparative analysis of the genome sequences of Bordetella pertussis, Bordetella parapertussis and Bordetella bronchiseptica.</title>
        <authorList>
            <person name="Parkhill J."/>
            <person name="Sebaihia M."/>
            <person name="Preston A."/>
            <person name="Murphy L.D."/>
            <person name="Thomson N.R."/>
            <person name="Harris D.E."/>
            <person name="Holden M.T.G."/>
            <person name="Churcher C.M."/>
            <person name="Bentley S.D."/>
            <person name="Mungall K.L."/>
            <person name="Cerdeno-Tarraga A.-M."/>
            <person name="Temple L."/>
            <person name="James K.D."/>
            <person name="Harris B."/>
            <person name="Quail M.A."/>
            <person name="Achtman M."/>
            <person name="Atkin R."/>
            <person name="Baker S."/>
            <person name="Basham D."/>
            <person name="Bason N."/>
            <person name="Cherevach I."/>
            <person name="Chillingworth T."/>
            <person name="Collins M."/>
            <person name="Cronin A."/>
            <person name="Davis P."/>
            <person name="Doggett J."/>
            <person name="Feltwell T."/>
            <person name="Goble A."/>
            <person name="Hamlin N."/>
            <person name="Hauser H."/>
            <person name="Holroyd S."/>
            <person name="Jagels K."/>
            <person name="Leather S."/>
            <person name="Moule S."/>
            <person name="Norberczak H."/>
            <person name="O'Neil S."/>
            <person name="Ormond D."/>
            <person name="Price C."/>
            <person name="Rabbinowitsch E."/>
            <person name="Rutter S."/>
            <person name="Sanders M."/>
            <person name="Saunders D."/>
            <person name="Seeger K."/>
            <person name="Sharp S."/>
            <person name="Simmonds M."/>
            <person name="Skelton J."/>
            <person name="Squares R."/>
            <person name="Squares S."/>
            <person name="Stevens K."/>
            <person name="Unwin L."/>
            <person name="Whitehead S."/>
            <person name="Barrell B.G."/>
            <person name="Maskell D.J."/>
        </authorList>
    </citation>
    <scope>NUCLEOTIDE SEQUENCE [LARGE SCALE GENOMIC DNA]</scope>
    <source>
        <strain>Tohama I / ATCC BAA-589 / NCTC 13251</strain>
    </source>
</reference>
<organism>
    <name type="scientific">Bordetella pertussis (strain Tohama I / ATCC BAA-589 / NCTC 13251)</name>
    <dbReference type="NCBI Taxonomy" id="257313"/>
    <lineage>
        <taxon>Bacteria</taxon>
        <taxon>Pseudomonadati</taxon>
        <taxon>Pseudomonadota</taxon>
        <taxon>Betaproteobacteria</taxon>
        <taxon>Burkholderiales</taxon>
        <taxon>Alcaligenaceae</taxon>
        <taxon>Bordetella</taxon>
    </lineage>
</organism>